<reference key="1">
    <citation type="journal article" date="1993" name="Eur. J. Biochem.">
        <title>Cloning and expression of phospholipase A2 from guinea pig gastric mucosa, its induction by carbachol and secretion in vivo.</title>
        <authorList>
            <person name="Ying Z."/>
            <person name="Tojo H."/>
            <person name="Nonaka Y."/>
            <person name="Okamoto M."/>
        </authorList>
    </citation>
    <scope>NUCLEOTIDE SEQUENCE [MRNA]</scope>
</reference>
<accession>P43434</accession>
<comment type="function">
    <text evidence="4 5 6">Secretory calcium-dependent phospholipase A2 that primarily targets dietary phospholipids in the intestinal tract. Hydrolyzes the ester bond of the fatty acyl group attached at sn-2 position of phospholipids (phospholipase A2 activity) with preference for phosphatidylethanolamines and phosphatidylglycerols over phosphatidylcholines. May play a role in the biosynthesis of N-acyl ethanolamines that regulate energy metabolism and inflammation in the intestinal tract. Hydrolyzes N-acyl phosphatidylethanolamines to N-acyl lysophosphatidylethanolamines, which are further cleaved by a lysophospholipase D to release N-acyl ethanolamines (By similarity). May act in an autocrine and paracrine manner (By similarity). Has anti-helminth activity in a process regulated by gut microbiota. Upon helminth infection of intestinal epithelia, directly affects phosphatidylethanolamine contents in the membrane of helminth larvae, likely controlling an array of phospholipid-mediated cellular processes such as membrane fusion and cell division while providing for better immune recognition, ultimately reducing larvae integrity and infectivity (By similarity).</text>
</comment>
<comment type="catalytic activity">
    <reaction evidence="4 5 7 8">
        <text>a 1,2-diacyl-sn-glycero-3-phosphocholine + H2O = a 1-acyl-sn-glycero-3-phosphocholine + a fatty acid + H(+)</text>
        <dbReference type="Rhea" id="RHEA:15801"/>
        <dbReference type="ChEBI" id="CHEBI:15377"/>
        <dbReference type="ChEBI" id="CHEBI:15378"/>
        <dbReference type="ChEBI" id="CHEBI:28868"/>
        <dbReference type="ChEBI" id="CHEBI:57643"/>
        <dbReference type="ChEBI" id="CHEBI:58168"/>
        <dbReference type="EC" id="3.1.1.4"/>
    </reaction>
</comment>
<comment type="catalytic activity">
    <reaction evidence="4">
        <text>1,2-ditetradecanoyl-sn-glycero-3-phosphocholine + H2O = 1-tetradecanoyl-sn-glycero-3-phosphocholine + tetradecanoate + H(+)</text>
        <dbReference type="Rhea" id="RHEA:54456"/>
        <dbReference type="ChEBI" id="CHEBI:15377"/>
        <dbReference type="ChEBI" id="CHEBI:15378"/>
        <dbReference type="ChEBI" id="CHEBI:30807"/>
        <dbReference type="ChEBI" id="CHEBI:45240"/>
        <dbReference type="ChEBI" id="CHEBI:64489"/>
    </reaction>
</comment>
<comment type="catalytic activity">
    <reaction evidence="5">
        <text>1,2-dihexadecanoyl-sn-glycero-3-phosphocholine + H2O = 1-hexadecanoyl-sn-glycero-3-phosphocholine + hexadecanoate + H(+)</text>
        <dbReference type="Rhea" id="RHEA:41223"/>
        <dbReference type="ChEBI" id="CHEBI:7896"/>
        <dbReference type="ChEBI" id="CHEBI:15377"/>
        <dbReference type="ChEBI" id="CHEBI:15378"/>
        <dbReference type="ChEBI" id="CHEBI:72998"/>
        <dbReference type="ChEBI" id="CHEBI:72999"/>
    </reaction>
    <physiologicalReaction direction="left-to-right" evidence="5">
        <dbReference type="Rhea" id="RHEA:41224"/>
    </physiologicalReaction>
</comment>
<comment type="catalytic activity">
    <reaction evidence="4">
        <text>1-hexadecanoyl-2-(9Z-octadecenoyl)-sn-glycero-3-phosphocholine + H2O = 1-hexadecanoyl-sn-glycero-3-phosphocholine + (9Z)-octadecenoate + H(+)</text>
        <dbReference type="Rhea" id="RHEA:38779"/>
        <dbReference type="ChEBI" id="CHEBI:15377"/>
        <dbReference type="ChEBI" id="CHEBI:15378"/>
        <dbReference type="ChEBI" id="CHEBI:30823"/>
        <dbReference type="ChEBI" id="CHEBI:72998"/>
        <dbReference type="ChEBI" id="CHEBI:73001"/>
    </reaction>
    <physiologicalReaction direction="left-to-right" evidence="4">
        <dbReference type="Rhea" id="RHEA:38780"/>
    </physiologicalReaction>
</comment>
<comment type="catalytic activity">
    <reaction evidence="5">
        <text>1-hexadecanoyl-2-(5Z,8Z,11Z,14Z-eicosatetraenoyl)-sn-glycero-3-phosphocholine + H2O = 1-hexadecanoyl-sn-glycero-3-phosphocholine + (5Z,8Z,11Z,14Z)-eicosatetraenoate + H(+)</text>
        <dbReference type="Rhea" id="RHEA:40427"/>
        <dbReference type="ChEBI" id="CHEBI:15377"/>
        <dbReference type="ChEBI" id="CHEBI:15378"/>
        <dbReference type="ChEBI" id="CHEBI:32395"/>
        <dbReference type="ChEBI" id="CHEBI:72998"/>
        <dbReference type="ChEBI" id="CHEBI:73003"/>
    </reaction>
    <physiologicalReaction direction="left-to-right" evidence="5">
        <dbReference type="Rhea" id="RHEA:40428"/>
    </physiologicalReaction>
</comment>
<comment type="catalytic activity">
    <reaction evidence="4">
        <text>1-hexadecanoyl-2-(9Z-octadecenoyl)-sn-glycero-3-phospho-(1'-sn-glycerol) + H2O = 1-hexadecanoyl-sn-glycero-3-phospho-(1'-sn-glycerol) + (9Z)-octadecenoate + H(+)</text>
        <dbReference type="Rhea" id="RHEA:40919"/>
        <dbReference type="ChEBI" id="CHEBI:15377"/>
        <dbReference type="ChEBI" id="CHEBI:15378"/>
        <dbReference type="ChEBI" id="CHEBI:30823"/>
        <dbReference type="ChEBI" id="CHEBI:72841"/>
        <dbReference type="ChEBI" id="CHEBI:75158"/>
    </reaction>
    <physiologicalReaction direction="left-to-right" evidence="4">
        <dbReference type="Rhea" id="RHEA:40920"/>
    </physiologicalReaction>
</comment>
<comment type="catalytic activity">
    <reaction evidence="5">
        <text>N-hexadecanoyl-1,2-di-(9Z-octadecenoyl)-sn-glycero-3-phosphoethanolamine + H2O = N-hexadecanoyl-1-(9Z-octadecenoyl)-sn-glycero-3-phosphoethanolamine + (9Z)-octadecenoate + H(+)</text>
        <dbReference type="Rhea" id="RHEA:45424"/>
        <dbReference type="ChEBI" id="CHEBI:15377"/>
        <dbReference type="ChEBI" id="CHEBI:15378"/>
        <dbReference type="ChEBI" id="CHEBI:30823"/>
        <dbReference type="ChEBI" id="CHEBI:78097"/>
        <dbReference type="ChEBI" id="CHEBI:85217"/>
    </reaction>
    <physiologicalReaction direction="left-to-right" evidence="5">
        <dbReference type="Rhea" id="RHEA:45425"/>
    </physiologicalReaction>
</comment>
<comment type="catalytic activity">
    <reaction evidence="5">
        <text>1-hexadecanoyl-2-(9Z,12Z-octadecadienoyl)-sn-glycero-3-phosphoethanolamine + H2O = 1-hexadecanoyl-sn-glycero-3-phosphoethanolamine + (9Z,12Z)-octadecadienoate + H(+)</text>
        <dbReference type="Rhea" id="RHEA:40815"/>
        <dbReference type="ChEBI" id="CHEBI:15377"/>
        <dbReference type="ChEBI" id="CHEBI:15378"/>
        <dbReference type="ChEBI" id="CHEBI:30245"/>
        <dbReference type="ChEBI" id="CHEBI:73004"/>
        <dbReference type="ChEBI" id="CHEBI:73008"/>
    </reaction>
    <physiologicalReaction direction="left-to-right" evidence="5">
        <dbReference type="Rhea" id="RHEA:40816"/>
    </physiologicalReaction>
</comment>
<comment type="catalytic activity">
    <reaction evidence="5">
        <text>N,1-dihexadecanoyl-2-(9Z,12Z-octadecadienoyl)-sn-glycero-3-phosphoethanolamine + H2O = N,1-dihexadecanoyl-sn-glycero-3-phosphoethanolamine + (9Z,12Z)-octadecadienoate + H(+)</text>
        <dbReference type="Rhea" id="RHEA:56424"/>
        <dbReference type="ChEBI" id="CHEBI:15377"/>
        <dbReference type="ChEBI" id="CHEBI:15378"/>
        <dbReference type="ChEBI" id="CHEBI:30245"/>
        <dbReference type="ChEBI" id="CHEBI:85334"/>
        <dbReference type="ChEBI" id="CHEBI:85335"/>
    </reaction>
    <physiologicalReaction direction="left-to-right" evidence="5">
        <dbReference type="Rhea" id="RHEA:56425"/>
    </physiologicalReaction>
</comment>
<comment type="cofactor">
    <cofactor evidence="3">
        <name>Ca(2+)</name>
        <dbReference type="ChEBI" id="CHEBI:29108"/>
    </cofactor>
    <text evidence="3">Binds 1 Ca(2+) ion per subunit.</text>
</comment>
<comment type="subunit">
    <text evidence="2">Monomer or homodimer.</text>
</comment>
<comment type="subcellular location">
    <subcellularLocation>
        <location evidence="4">Secreted</location>
    </subcellularLocation>
    <text evidence="4">Secreted from pancreatic acinar cells in its inactive form.</text>
</comment>
<comment type="PTM">
    <text evidence="4">Activated by trypsin cleavage in the duodenum. Can also be activated by thrombin or autocatalytically.</text>
</comment>
<comment type="similarity">
    <text evidence="10">Belongs to the phospholipase A2 family.</text>
</comment>
<keyword id="KW-0068">Autocatalytic cleavage</keyword>
<keyword id="KW-0106">Calcium</keyword>
<keyword id="KW-1015">Disulfide bond</keyword>
<keyword id="KW-0378">Hydrolase</keyword>
<keyword id="KW-0443">Lipid metabolism</keyword>
<keyword id="KW-0479">Metal-binding</keyword>
<keyword id="KW-1208">Phospholipid metabolism</keyword>
<keyword id="KW-1185">Reference proteome</keyword>
<keyword id="KW-0964">Secreted</keyword>
<keyword id="KW-0732">Signal</keyword>
<keyword id="KW-0865">Zymogen</keyword>
<proteinExistence type="evidence at transcript level"/>
<gene>
    <name type="primary">PLA2G1B</name>
</gene>
<evidence type="ECO:0000250" key="1"/>
<evidence type="ECO:0000250" key="2">
    <source>
        <dbReference type="UniProtKB" id="P00592"/>
    </source>
</evidence>
<evidence type="ECO:0000250" key="3">
    <source>
        <dbReference type="UniProtKB" id="P00593"/>
    </source>
</evidence>
<evidence type="ECO:0000250" key="4">
    <source>
        <dbReference type="UniProtKB" id="P04054"/>
    </source>
</evidence>
<evidence type="ECO:0000250" key="5">
    <source>
        <dbReference type="UniProtKB" id="P04055"/>
    </source>
</evidence>
<evidence type="ECO:0000250" key="6">
    <source>
        <dbReference type="UniProtKB" id="Q9Z0Y2"/>
    </source>
</evidence>
<evidence type="ECO:0000255" key="7">
    <source>
        <dbReference type="PROSITE-ProRule" id="PRU10035"/>
    </source>
</evidence>
<evidence type="ECO:0000255" key="8">
    <source>
        <dbReference type="PROSITE-ProRule" id="PRU10036"/>
    </source>
</evidence>
<evidence type="ECO:0000269" key="9">
    <source>
    </source>
</evidence>
<evidence type="ECO:0000305" key="10"/>
<organism>
    <name type="scientific">Cavia porcellus</name>
    <name type="common">Guinea pig</name>
    <dbReference type="NCBI Taxonomy" id="10141"/>
    <lineage>
        <taxon>Eukaryota</taxon>
        <taxon>Metazoa</taxon>
        <taxon>Chordata</taxon>
        <taxon>Craniata</taxon>
        <taxon>Vertebrata</taxon>
        <taxon>Euteleostomi</taxon>
        <taxon>Mammalia</taxon>
        <taxon>Eutheria</taxon>
        <taxon>Euarchontoglires</taxon>
        <taxon>Glires</taxon>
        <taxon>Rodentia</taxon>
        <taxon>Hystricomorpha</taxon>
        <taxon>Caviidae</taxon>
        <taxon>Cavia</taxon>
    </lineage>
</organism>
<protein>
    <recommendedName>
        <fullName>Phospholipase A2</fullName>
        <ecNumber evidence="4 5">3.1.1.4</ecNumber>
    </recommendedName>
    <alternativeName>
        <fullName>Group IB phospholipase A2</fullName>
    </alternativeName>
    <alternativeName>
        <fullName>Phosphatidylcholine 2-acylhydrolase 1B</fullName>
    </alternativeName>
</protein>
<dbReference type="EC" id="3.1.1.4" evidence="4 5"/>
<dbReference type="EMBL" id="D00740">
    <property type="protein sequence ID" value="BAA00640.1"/>
    <property type="molecule type" value="mRNA"/>
</dbReference>
<dbReference type="PIR" id="S34049">
    <property type="entry name" value="S34049"/>
</dbReference>
<dbReference type="RefSeq" id="XP_003477984.1">
    <property type="nucleotide sequence ID" value="XM_003477936.2"/>
</dbReference>
<dbReference type="SMR" id="P43434"/>
<dbReference type="FunCoup" id="P43434">
    <property type="interactions" value="426"/>
</dbReference>
<dbReference type="STRING" id="10141.ENSCPOP00000032707"/>
<dbReference type="Ensembl" id="ENSCPOT00000047764.1">
    <property type="protein sequence ID" value="ENSCPOP00000032707.1"/>
    <property type="gene ID" value="ENSCPOG00000012358.4"/>
</dbReference>
<dbReference type="GeneID" id="100732984"/>
<dbReference type="KEGG" id="cpoc:100732984"/>
<dbReference type="CTD" id="5319"/>
<dbReference type="VEuPathDB" id="HostDB:ENSCPOG00000012358"/>
<dbReference type="eggNOG" id="KOG4087">
    <property type="taxonomic scope" value="Eukaryota"/>
</dbReference>
<dbReference type="GeneTree" id="ENSGT00940000154885"/>
<dbReference type="HOGENOM" id="CLU_090683_1_1_1"/>
<dbReference type="InParanoid" id="P43434"/>
<dbReference type="OMA" id="RSEWNPE"/>
<dbReference type="OrthoDB" id="5841574at2759"/>
<dbReference type="TreeFam" id="TF319283"/>
<dbReference type="Proteomes" id="UP000005447">
    <property type="component" value="Unassembled WGS sequence"/>
</dbReference>
<dbReference type="GO" id="GO:0009986">
    <property type="term" value="C:cell surface"/>
    <property type="evidence" value="ECO:0007669"/>
    <property type="project" value="Ensembl"/>
</dbReference>
<dbReference type="GO" id="GO:0005615">
    <property type="term" value="C:extracellular space"/>
    <property type="evidence" value="ECO:0007669"/>
    <property type="project" value="Ensembl"/>
</dbReference>
<dbReference type="GO" id="GO:0032052">
    <property type="term" value="F:bile acid binding"/>
    <property type="evidence" value="ECO:0000250"/>
    <property type="project" value="UniProtKB"/>
</dbReference>
<dbReference type="GO" id="GO:0005509">
    <property type="term" value="F:calcium ion binding"/>
    <property type="evidence" value="ECO:0007669"/>
    <property type="project" value="Ensembl"/>
</dbReference>
<dbReference type="GO" id="GO:0047498">
    <property type="term" value="F:calcium-dependent phospholipase A2 activity"/>
    <property type="evidence" value="ECO:0000250"/>
    <property type="project" value="UniProtKB"/>
</dbReference>
<dbReference type="GO" id="GO:0005543">
    <property type="term" value="F:phospholipid binding"/>
    <property type="evidence" value="ECO:0007669"/>
    <property type="project" value="TreeGrafter"/>
</dbReference>
<dbReference type="GO" id="GO:0005102">
    <property type="term" value="F:signaling receptor binding"/>
    <property type="evidence" value="ECO:0007669"/>
    <property type="project" value="Ensembl"/>
</dbReference>
<dbReference type="GO" id="GO:0019731">
    <property type="term" value="P:antibacterial humoral response"/>
    <property type="evidence" value="ECO:0007669"/>
    <property type="project" value="Ensembl"/>
</dbReference>
<dbReference type="GO" id="GO:0061844">
    <property type="term" value="P:antimicrobial humoral immune response mediated by antimicrobial peptide"/>
    <property type="evidence" value="ECO:0007669"/>
    <property type="project" value="Ensembl"/>
</dbReference>
<dbReference type="GO" id="GO:0050482">
    <property type="term" value="P:arachidonate secretion"/>
    <property type="evidence" value="ECO:0007669"/>
    <property type="project" value="InterPro"/>
</dbReference>
<dbReference type="GO" id="GO:0050830">
    <property type="term" value="P:defense response to Gram-positive bacterium"/>
    <property type="evidence" value="ECO:0007669"/>
    <property type="project" value="Ensembl"/>
</dbReference>
<dbReference type="GO" id="GO:0006633">
    <property type="term" value="P:fatty acid biosynthetic process"/>
    <property type="evidence" value="ECO:0007669"/>
    <property type="project" value="Ensembl"/>
</dbReference>
<dbReference type="GO" id="GO:0002227">
    <property type="term" value="P:innate immune response in mucosa"/>
    <property type="evidence" value="ECO:0007669"/>
    <property type="project" value="Ensembl"/>
</dbReference>
<dbReference type="GO" id="GO:0016042">
    <property type="term" value="P:lipid catabolic process"/>
    <property type="evidence" value="ECO:0007669"/>
    <property type="project" value="Ensembl"/>
</dbReference>
<dbReference type="GO" id="GO:0046470">
    <property type="term" value="P:phosphatidylcholine metabolic process"/>
    <property type="evidence" value="ECO:0007669"/>
    <property type="project" value="Ensembl"/>
</dbReference>
<dbReference type="GO" id="GO:0046471">
    <property type="term" value="P:phosphatidylglycerol metabolic process"/>
    <property type="evidence" value="ECO:0000250"/>
    <property type="project" value="UniProtKB"/>
</dbReference>
<dbReference type="GO" id="GO:0048146">
    <property type="term" value="P:positive regulation of fibroblast proliferation"/>
    <property type="evidence" value="ECO:0007669"/>
    <property type="project" value="Ensembl"/>
</dbReference>
<dbReference type="GO" id="GO:1904635">
    <property type="term" value="P:positive regulation of podocyte apoptotic process"/>
    <property type="evidence" value="ECO:0000250"/>
    <property type="project" value="UniProtKB"/>
</dbReference>
<dbReference type="CDD" id="cd00125">
    <property type="entry name" value="PLA2c"/>
    <property type="match status" value="1"/>
</dbReference>
<dbReference type="FunFam" id="1.20.90.10:FF:000011">
    <property type="entry name" value="Phospholipase A(2)"/>
    <property type="match status" value="1"/>
</dbReference>
<dbReference type="Gene3D" id="1.20.90.10">
    <property type="entry name" value="Phospholipase A2 domain"/>
    <property type="match status" value="1"/>
</dbReference>
<dbReference type="InterPro" id="IPR001211">
    <property type="entry name" value="PLipase_A2"/>
</dbReference>
<dbReference type="InterPro" id="IPR033112">
    <property type="entry name" value="PLipase_A2_Asp_AS"/>
</dbReference>
<dbReference type="InterPro" id="IPR016090">
    <property type="entry name" value="PLipase_A2_dom"/>
</dbReference>
<dbReference type="InterPro" id="IPR036444">
    <property type="entry name" value="PLipase_A2_dom_sf"/>
</dbReference>
<dbReference type="InterPro" id="IPR033113">
    <property type="entry name" value="PLipase_A2_His_AS"/>
</dbReference>
<dbReference type="PANTHER" id="PTHR11716:SF94">
    <property type="entry name" value="PHOSPHOLIPASE A2"/>
    <property type="match status" value="1"/>
</dbReference>
<dbReference type="PANTHER" id="PTHR11716">
    <property type="entry name" value="PHOSPHOLIPASE A2 FAMILY MEMBER"/>
    <property type="match status" value="1"/>
</dbReference>
<dbReference type="Pfam" id="PF00068">
    <property type="entry name" value="Phospholip_A2_1"/>
    <property type="match status" value="1"/>
</dbReference>
<dbReference type="PRINTS" id="PR00389">
    <property type="entry name" value="PHPHLIPASEA2"/>
</dbReference>
<dbReference type="SMART" id="SM00085">
    <property type="entry name" value="PA2c"/>
    <property type="match status" value="1"/>
</dbReference>
<dbReference type="SUPFAM" id="SSF48619">
    <property type="entry name" value="Phospholipase A2, PLA2"/>
    <property type="match status" value="1"/>
</dbReference>
<dbReference type="PROSITE" id="PS00119">
    <property type="entry name" value="PA2_ASP"/>
    <property type="match status" value="1"/>
</dbReference>
<dbReference type="PROSITE" id="PS00118">
    <property type="entry name" value="PA2_HIS"/>
    <property type="match status" value="1"/>
</dbReference>
<sequence length="146" mass="16187">MKLLVLAALLSVSAAAHIITPRALWQFRDMIKCAIPGSRPYSEYNNYGCFCGLGGSGTPVDELDRCCEIHDACYTQAKHLESCKSVIDNPYTNSYSFSCSGTNIICSSKNKECEEFICNCDRAAAICFSKAPYNENNKNINKKERC</sequence>
<name>PA21B_CAVPO</name>
<feature type="signal peptide" evidence="1">
    <location>
        <begin position="1"/>
        <end position="15"/>
    </location>
</feature>
<feature type="propeptide" id="PRO_0000022735" description="Activation peptide">
    <location>
        <begin position="16"/>
        <end position="22"/>
    </location>
</feature>
<feature type="chain" id="PRO_0000022736" description="Phospholipase A2" evidence="9">
    <location>
        <begin position="23"/>
        <end position="146"/>
    </location>
</feature>
<feature type="active site" evidence="3">
    <location>
        <position position="70"/>
    </location>
</feature>
<feature type="active site" evidence="3">
    <location>
        <position position="121"/>
    </location>
</feature>
<feature type="binding site" evidence="1">
    <location>
        <position position="50"/>
    </location>
    <ligand>
        <name>Ca(2+)</name>
        <dbReference type="ChEBI" id="CHEBI:29108"/>
    </ligand>
</feature>
<feature type="binding site" evidence="3">
    <location>
        <position position="52"/>
    </location>
    <ligand>
        <name>Ca(2+)</name>
        <dbReference type="ChEBI" id="CHEBI:29108"/>
    </ligand>
</feature>
<feature type="binding site" evidence="3">
    <location>
        <position position="54"/>
    </location>
    <ligand>
        <name>Ca(2+)</name>
        <dbReference type="ChEBI" id="CHEBI:29108"/>
    </ligand>
</feature>
<feature type="binding site" evidence="3">
    <location>
        <position position="71"/>
    </location>
    <ligand>
        <name>Ca(2+)</name>
        <dbReference type="ChEBI" id="CHEBI:29108"/>
    </ligand>
</feature>
<feature type="disulfide bond" evidence="3">
    <location>
        <begin position="33"/>
        <end position="99"/>
    </location>
</feature>
<feature type="disulfide bond" evidence="3">
    <location>
        <begin position="49"/>
        <end position="146"/>
    </location>
</feature>
<feature type="disulfide bond" evidence="3">
    <location>
        <begin position="51"/>
        <end position="67"/>
    </location>
</feature>
<feature type="disulfide bond" evidence="3">
    <location>
        <begin position="66"/>
        <end position="127"/>
    </location>
</feature>
<feature type="disulfide bond" evidence="3">
    <location>
        <begin position="73"/>
        <end position="120"/>
    </location>
</feature>
<feature type="disulfide bond" evidence="3">
    <location>
        <begin position="83"/>
        <end position="113"/>
    </location>
</feature>
<feature type="disulfide bond" evidence="3">
    <location>
        <begin position="106"/>
        <end position="118"/>
    </location>
</feature>